<accession>P0C793</accession>
<organismHost>
    <name type="scientific">Aves</name>
    <dbReference type="NCBI Taxonomy" id="8782"/>
</organismHost>
<organismHost>
    <name type="scientific">Equus caballus</name>
    <name type="common">Horse</name>
    <dbReference type="NCBI Taxonomy" id="9796"/>
</organismHost>
<organismHost>
    <name type="scientific">Homo sapiens</name>
    <name type="common">Human</name>
    <dbReference type="NCBI Taxonomy" id="9606"/>
</organismHost>
<organismHost>
    <name type="scientific">Phocidae</name>
    <name type="common">true seals</name>
    <dbReference type="NCBI Taxonomy" id="9709"/>
</organismHost>
<feature type="chain" id="PRO_0000402434" description="Protein PB1-F2">
    <location>
        <begin position="1"/>
        <end position="90"/>
    </location>
</feature>
<feature type="region of interest" description="Disordered" evidence="2">
    <location>
        <begin position="1"/>
        <end position="29"/>
    </location>
</feature>
<feature type="region of interest" description="Mitochondrial targeting sequence" evidence="1">
    <location>
        <begin position="65"/>
        <end position="87"/>
    </location>
</feature>
<feature type="compositionally biased region" description="Polar residues" evidence="2">
    <location>
        <begin position="1"/>
        <end position="16"/>
    </location>
</feature>
<feature type="site" description="High pathogenicity" evidence="1">
    <location>
        <position position="66"/>
    </location>
</feature>
<proteinExistence type="inferred from homology"/>
<organism>
    <name type="scientific">Influenza A virus (strain A/Seal/Massachusetts/1/1980 H7N7)</name>
    <dbReference type="NCBI Taxonomy" id="384493"/>
    <lineage>
        <taxon>Viruses</taxon>
        <taxon>Riboviria</taxon>
        <taxon>Orthornavirae</taxon>
        <taxon>Negarnaviricota</taxon>
        <taxon>Polyploviricotina</taxon>
        <taxon>Insthoviricetes</taxon>
        <taxon>Articulavirales</taxon>
        <taxon>Orthomyxoviridae</taxon>
        <taxon>Alphainfluenzavirus</taxon>
        <taxon>Alphainfluenzavirus influenzae</taxon>
        <taxon>Influenza A virus</taxon>
    </lineage>
</organism>
<protein>
    <recommendedName>
        <fullName evidence="1">Protein PB1-F2</fullName>
    </recommendedName>
</protein>
<keyword id="KW-0053">Apoptosis</keyword>
<keyword id="KW-1035">Host cytoplasm</keyword>
<keyword id="KW-1043">Host membrane</keyword>
<keyword id="KW-1045">Host mitochondrion</keyword>
<keyword id="KW-1046">Host mitochondrion inner membrane</keyword>
<keyword id="KW-1048">Host nucleus</keyword>
<keyword id="KW-0945">Host-virus interaction</keyword>
<keyword id="KW-1090">Inhibition of host innate immune response by virus</keyword>
<keyword id="KW-1097">Inhibition of host MAVS by virus</keyword>
<keyword id="KW-1113">Inhibition of host RLR pathway by virus</keyword>
<keyword id="KW-0472">Membrane</keyword>
<keyword id="KW-1119">Modulation of host cell apoptosis by virus</keyword>
<keyword id="KW-0899">Viral immunoevasion</keyword>
<evidence type="ECO:0000255" key="1">
    <source>
        <dbReference type="HAMAP-Rule" id="MF_04064"/>
    </source>
</evidence>
<evidence type="ECO:0000256" key="2">
    <source>
        <dbReference type="SAM" id="MobiDB-lite"/>
    </source>
</evidence>
<name>PB1F2_I80A2</name>
<dbReference type="EMBL" id="DQ266098">
    <property type="status" value="NOT_ANNOTATED_CDS"/>
    <property type="molecule type" value="Genomic_RNA"/>
</dbReference>
<dbReference type="SMR" id="P0C793"/>
<dbReference type="Proteomes" id="UP000008576">
    <property type="component" value="Genome"/>
</dbReference>
<dbReference type="GO" id="GO:0044164">
    <property type="term" value="C:host cell cytosol"/>
    <property type="evidence" value="ECO:0007669"/>
    <property type="project" value="UniProtKB-SubCell"/>
</dbReference>
<dbReference type="GO" id="GO:0044192">
    <property type="term" value="C:host cell mitochondrial inner membrane"/>
    <property type="evidence" value="ECO:0007669"/>
    <property type="project" value="UniProtKB-SubCell"/>
</dbReference>
<dbReference type="GO" id="GO:0042025">
    <property type="term" value="C:host cell nucleus"/>
    <property type="evidence" value="ECO:0007669"/>
    <property type="project" value="UniProtKB-SubCell"/>
</dbReference>
<dbReference type="GO" id="GO:0016020">
    <property type="term" value="C:membrane"/>
    <property type="evidence" value="ECO:0007669"/>
    <property type="project" value="UniProtKB-UniRule"/>
</dbReference>
<dbReference type="GO" id="GO:0052150">
    <property type="term" value="P:symbiont-mediated perturbation of host apoptosis"/>
    <property type="evidence" value="ECO:0007669"/>
    <property type="project" value="UniProtKB-KW"/>
</dbReference>
<dbReference type="GO" id="GO:0039545">
    <property type="term" value="P:symbiont-mediated suppression of host cytoplasmic pattern recognition receptor signaling pathway via inhibition of MAVS activity"/>
    <property type="evidence" value="ECO:0007669"/>
    <property type="project" value="UniProtKB-KW"/>
</dbReference>
<dbReference type="HAMAP" id="MF_04064">
    <property type="entry name" value="INFV_PB1F2"/>
    <property type="match status" value="1"/>
</dbReference>
<dbReference type="InterPro" id="IPR021045">
    <property type="entry name" value="Flu_proapoptotic_PB1-F2"/>
</dbReference>
<dbReference type="Pfam" id="PF11986">
    <property type="entry name" value="PB1-F2"/>
    <property type="match status" value="1"/>
</dbReference>
<sequence length="90" mass="10859">MEQEQDTPWTQSTEHINIQKRGNGKQTQKLEHPNLTQLMDHCLRIMSQVDMHKQIVSWKQWLSLKSPTQESLKTRVLKRWKSFNKQEWTS</sequence>
<comment type="function">
    <text evidence="1">Plays an important role in promoting lung pathology in both primary viral infection and secondary bacterial infection. Promotes alteration of mitochondrial morphology, dissipation of mitochondrial membrane potential, and cell death. Alternatively, inhibits the production of interferon in the infected cell at the level of host mitochondrial antiviral signaling MAVS. Its level of expression differs greatly depending on which cell type is infected, in a manner that is independent of the levels of expression of other viral proteins. Monocytic cells are more affected than epithelial cells. Seems to disable virus-infected monocytes or other host innate immune cells. During early stage of infection, predisposes the mitochondria to permeability transition through interaction with host SLC25A6/ANT3 and VDAC1. These proteins participate in the formation of the permeability transition pore complex (PTPC) responsible of the release of mitochondrial products that triggers apoptosis.</text>
</comment>
<comment type="subunit">
    <text evidence="1">Oligomer. Interacts with human SLC25A6/ANT3 and VDAC1. Interacts with host MAVS.</text>
</comment>
<comment type="subcellular location">
    <subcellularLocation>
        <location evidence="1">Host mitochondrion inner membrane</location>
    </subcellularLocation>
    <subcellularLocation>
        <location evidence="1">Host nucleus</location>
    </subcellularLocation>
    <subcellularLocation>
        <location evidence="1">Host cytoplasm</location>
        <location evidence="1">Host cytosol</location>
    </subcellularLocation>
    <text evidence="1">Inner mitochondrial membrane in most cells types. Otherwise is detected in the nucleus and cytosol.</text>
</comment>
<comment type="miscellaneous">
    <text>Is not encoded in all strains, and seems to be dispensable for replication.</text>
</comment>
<comment type="similarity">
    <text evidence="1">Belongs to the influenza viruses PB1-F2 family.</text>
</comment>
<reference key="1">
    <citation type="journal article" date="2005" name="Proc. Natl. Acad. Sci. U.S.A.">
        <title>The viral polymerase mediates adaptation of an avian influenza virus to a mammalian host.</title>
        <authorList>
            <person name="Gabriel G."/>
            <person name="Dauber B."/>
            <person name="Wolff T."/>
            <person name="Planz O."/>
            <person name="Klenk H.D."/>
            <person name="Stech J."/>
        </authorList>
    </citation>
    <scope>NUCLEOTIDE SEQUENCE [GENOMIC RNA]</scope>
    <source>
        <strain>SC35M mouse-adapted</strain>
    </source>
</reference>
<gene>
    <name evidence="1" type="primary">PB1</name>
</gene>